<proteinExistence type="evidence at protein level"/>
<feature type="chain" id="PRO_0000203004" description="Vacuole localized DSC protein 1">
    <location>
        <begin position="1"/>
        <end position="242"/>
    </location>
</feature>
<feature type="transmembrane region" description="Helical" evidence="1">
    <location>
        <begin position="128"/>
        <end position="148"/>
    </location>
</feature>
<feature type="transmembrane region" description="Helical" evidence="1">
    <location>
        <begin position="152"/>
        <end position="172"/>
    </location>
</feature>
<name>VLD1_YEAST</name>
<reference key="1">
    <citation type="journal article" date="1997" name="Nature">
        <title>The nucleotide sequence of Saccharomyces cerevisiae chromosome IX.</title>
        <authorList>
            <person name="Churcher C.M."/>
            <person name="Bowman S."/>
            <person name="Badcock K."/>
            <person name="Bankier A.T."/>
            <person name="Brown D."/>
            <person name="Chillingworth T."/>
            <person name="Connor R."/>
            <person name="Devlin K."/>
            <person name="Gentles S."/>
            <person name="Hamlin N."/>
            <person name="Harris D.E."/>
            <person name="Horsnell T."/>
            <person name="Hunt S."/>
            <person name="Jagels K."/>
            <person name="Jones M."/>
            <person name="Lye G."/>
            <person name="Moule S."/>
            <person name="Odell C."/>
            <person name="Pearson D."/>
            <person name="Rajandream M.A."/>
            <person name="Rice P."/>
            <person name="Rowley N."/>
            <person name="Skelton J."/>
            <person name="Smith V."/>
            <person name="Walsh S.V."/>
            <person name="Whitehead S."/>
            <person name="Barrell B.G."/>
        </authorList>
    </citation>
    <scope>NUCLEOTIDE SEQUENCE [LARGE SCALE GENOMIC DNA]</scope>
    <source>
        <strain>ATCC 204508 / S288c</strain>
    </source>
</reference>
<reference key="2">
    <citation type="journal article" date="2014" name="G3 (Bethesda)">
        <title>The reference genome sequence of Saccharomyces cerevisiae: Then and now.</title>
        <authorList>
            <person name="Engel S.R."/>
            <person name="Dietrich F.S."/>
            <person name="Fisk D.G."/>
            <person name="Binkley G."/>
            <person name="Balakrishnan R."/>
            <person name="Costanzo M.C."/>
            <person name="Dwight S.S."/>
            <person name="Hitz B.C."/>
            <person name="Karra K."/>
            <person name="Nash R.S."/>
            <person name="Weng S."/>
            <person name="Wong E.D."/>
            <person name="Lloyd P."/>
            <person name="Skrzypek M.S."/>
            <person name="Miyasato S.R."/>
            <person name="Simison M."/>
            <person name="Cherry J.M."/>
        </authorList>
    </citation>
    <scope>GENOME REANNOTATION</scope>
    <source>
        <strain>ATCC 204508 / S288c</strain>
    </source>
</reference>
<reference key="3">
    <citation type="journal article" date="2007" name="Genome Res.">
        <title>Approaching a complete repository of sequence-verified protein-encoding clones for Saccharomyces cerevisiae.</title>
        <authorList>
            <person name="Hu Y."/>
            <person name="Rolfs A."/>
            <person name="Bhullar B."/>
            <person name="Murthy T.V.S."/>
            <person name="Zhu C."/>
            <person name="Berger M.F."/>
            <person name="Camargo A.A."/>
            <person name="Kelley F."/>
            <person name="McCarron S."/>
            <person name="Jepson D."/>
            <person name="Richardson A."/>
            <person name="Raphael J."/>
            <person name="Moreira D."/>
            <person name="Taycher E."/>
            <person name="Zuo D."/>
            <person name="Mohr S."/>
            <person name="Kane M.F."/>
            <person name="Williamson J."/>
            <person name="Simpson A.J.G."/>
            <person name="Bulyk M.L."/>
            <person name="Harlow E."/>
            <person name="Marsischky G."/>
            <person name="Kolodner R.D."/>
            <person name="LaBaer J."/>
        </authorList>
    </citation>
    <scope>NUCLEOTIDE SEQUENCE [GENOMIC DNA]</scope>
    <source>
        <strain>ATCC 204508 / S288c</strain>
    </source>
</reference>
<reference key="4">
    <citation type="journal article" date="2003" name="Nature">
        <title>Sequencing and comparison of yeast species to identify genes and regulatory elements.</title>
        <authorList>
            <person name="Kellis M."/>
            <person name="Patterson N."/>
            <person name="Endrizzi M."/>
            <person name="Birren B.W."/>
            <person name="Lander E.S."/>
        </authorList>
    </citation>
    <scope>IDENTIFICATION OF PROBABLE INITIATION SITE</scope>
</reference>
<reference key="5">
    <citation type="journal article" date="2018" name="Elife">
        <title>Sorting of a multi-subunit ubiquitin ligase complex in the endolysosome system.</title>
        <authorList>
            <person name="Yang X."/>
            <person name="Arines F.M."/>
            <person name="Zhang W."/>
            <person name="Li M."/>
        </authorList>
    </citation>
    <scope>FUNCTION</scope>
    <scope>SUBCELLULAR LOCATION</scope>
    <scope>IDENTIFICATION IN THE VACUOLE-LOCALIZED DSC COMPLEX</scope>
</reference>
<dbReference type="EMBL" id="Z37996">
    <property type="protein sequence ID" value="CAA86084.1"/>
    <property type="status" value="ALT_INIT"/>
    <property type="molecule type" value="Genomic_DNA"/>
</dbReference>
<dbReference type="EMBL" id="AY692726">
    <property type="protein sequence ID" value="AAT92745.1"/>
    <property type="status" value="ALT_INIT"/>
    <property type="molecule type" value="Genomic_DNA"/>
</dbReference>
<dbReference type="EMBL" id="BK006942">
    <property type="protein sequence ID" value="DAA08560.1"/>
    <property type="molecule type" value="Genomic_DNA"/>
</dbReference>
<dbReference type="PIR" id="S48358">
    <property type="entry name" value="S48358"/>
</dbReference>
<dbReference type="RefSeq" id="NP_012279.4">
    <property type="nucleotide sequence ID" value="NM_001179536.3"/>
</dbReference>
<dbReference type="SMR" id="P40570"/>
<dbReference type="BioGRID" id="35006">
    <property type="interactions" value="39"/>
</dbReference>
<dbReference type="DIP" id="DIP-2640N"/>
<dbReference type="FunCoup" id="P40570">
    <property type="interactions" value="33"/>
</dbReference>
<dbReference type="IntAct" id="P40570">
    <property type="interactions" value="4"/>
</dbReference>
<dbReference type="MINT" id="P40570"/>
<dbReference type="STRING" id="4932.YIR014W"/>
<dbReference type="iPTMnet" id="P40570"/>
<dbReference type="PaxDb" id="4932-YIR014W"/>
<dbReference type="PeptideAtlas" id="P40570"/>
<dbReference type="EnsemblFungi" id="YIR014W_mRNA">
    <property type="protein sequence ID" value="YIR014W"/>
    <property type="gene ID" value="YIR014W"/>
</dbReference>
<dbReference type="GeneID" id="854831"/>
<dbReference type="KEGG" id="sce:YIR014W"/>
<dbReference type="AGR" id="SGD:S000001453"/>
<dbReference type="SGD" id="S000001453">
    <property type="gene designation" value="VLD1"/>
</dbReference>
<dbReference type="VEuPathDB" id="FungiDB:YIR014W"/>
<dbReference type="eggNOG" id="ENOG502S7ZS">
    <property type="taxonomic scope" value="Eukaryota"/>
</dbReference>
<dbReference type="HOGENOM" id="CLU_098038_0_0_1"/>
<dbReference type="InParanoid" id="P40570"/>
<dbReference type="OMA" id="CQIVIIN"/>
<dbReference type="OrthoDB" id="4035006at2759"/>
<dbReference type="BioCyc" id="YEAST:G3O-31435-MONOMER"/>
<dbReference type="BioGRID-ORCS" id="854831">
    <property type="hits" value="4 hits in 10 CRISPR screens"/>
</dbReference>
<dbReference type="PRO" id="PR:P40570"/>
<dbReference type="Proteomes" id="UP000002311">
    <property type="component" value="Chromosome IX"/>
</dbReference>
<dbReference type="RNAct" id="P40570">
    <property type="molecule type" value="protein"/>
</dbReference>
<dbReference type="GO" id="GO:0044695">
    <property type="term" value="C:Dsc E3 ubiquitin ligase complex"/>
    <property type="evidence" value="ECO:0000314"/>
    <property type="project" value="SGD"/>
</dbReference>
<dbReference type="GO" id="GO:0005783">
    <property type="term" value="C:endoplasmic reticulum"/>
    <property type="evidence" value="ECO:0007005"/>
    <property type="project" value="SGD"/>
</dbReference>
<dbReference type="GO" id="GO:0000324">
    <property type="term" value="C:fungal-type vacuole"/>
    <property type="evidence" value="ECO:0007005"/>
    <property type="project" value="SGD"/>
</dbReference>
<dbReference type="GO" id="GO:0000329">
    <property type="term" value="C:fungal-type vacuole membrane"/>
    <property type="evidence" value="ECO:0000255"/>
    <property type="project" value="SGD"/>
</dbReference>
<evidence type="ECO:0000255" key="1"/>
<evidence type="ECO:0000269" key="2">
    <source>
    </source>
</evidence>
<evidence type="ECO:0000303" key="3">
    <source>
    </source>
</evidence>
<evidence type="ECO:0000305" key="4"/>
<comment type="function">
    <text evidence="2">Component of the vacuole-localized DSC E3 ubiquitin ligase complex involved in the targeting of the complex to the vacuole membrane via the AP3 pathway to ubiquinate vacuolar membrane proteins (PubMed:29355480). Competes with GLD1 to determine the subcellular localizations of the DSC complex (PubMed:29355480).</text>
</comment>
<comment type="subunit">
    <text evidence="2">Part of the vacuole-localized DSC E3 ligase complex composed of at least TUL1, DSC2, DSC3, UBX3, CDC48 and VLD1.</text>
</comment>
<comment type="subcellular location">
    <subcellularLocation>
        <location evidence="2">Vacuole membrane</location>
        <topology evidence="1">Multi-pass membrane protein</topology>
    </subcellularLocation>
</comment>
<comment type="sequence caution" evidence="4">
    <conflict type="erroneous initiation">
        <sequence resource="EMBL-CDS" id="AAT92745"/>
    </conflict>
</comment>
<comment type="sequence caution" evidence="4">
    <conflict type="erroneous initiation">
        <sequence resource="EMBL-CDS" id="CAA86084"/>
    </conflict>
</comment>
<gene>
    <name evidence="3" type="primary">VLD1</name>
    <name type="ordered locus">YIR014W</name>
</gene>
<protein>
    <recommendedName>
        <fullName evidence="3">Vacuole localized DSC protein 1</fullName>
    </recommendedName>
</protein>
<accession>P40570</accession>
<accession>D6VVU4</accession>
<organism>
    <name type="scientific">Saccharomyces cerevisiae (strain ATCC 204508 / S288c)</name>
    <name type="common">Baker's yeast</name>
    <dbReference type="NCBI Taxonomy" id="559292"/>
    <lineage>
        <taxon>Eukaryota</taxon>
        <taxon>Fungi</taxon>
        <taxon>Dikarya</taxon>
        <taxon>Ascomycota</taxon>
        <taxon>Saccharomycotina</taxon>
        <taxon>Saccharomycetes</taxon>
        <taxon>Saccharomycetales</taxon>
        <taxon>Saccharomycetaceae</taxon>
        <taxon>Saccharomyces</taxon>
    </lineage>
</organism>
<keyword id="KW-0472">Membrane</keyword>
<keyword id="KW-1185">Reference proteome</keyword>
<keyword id="KW-0812">Transmembrane</keyword>
<keyword id="KW-1133">Transmembrane helix</keyword>
<keyword id="KW-0926">Vacuole</keyword>
<sequence length="242" mass="27600">MLHLEDDNGRQRSVIANLQKFVYCCLYLRFIKDGSLFLILLGWIISSLCDFIQELTLRYLKKNYLEVGRDNDQEDDESLAIRGLETPIVRMIINKAIRYYQGLILLETAYCIVYHIRLDVSRDICSKPYGFVIMLLIREFTCPVPTAFPSKLLLVLLDILLLFCQIVIINGSLSSSLQNVKLIVKELNAEEEGALNILKLNTWHMDATGPELIVLKNHDKSIPQQADGDDATEITPLLNIAE</sequence>